<dbReference type="EMBL" id="L12032">
    <property type="protein sequence ID" value="AAA48752.1"/>
    <property type="molecule type" value="mRNA"/>
</dbReference>
<dbReference type="PIR" id="A40735">
    <property type="entry name" value="A40735"/>
</dbReference>
<dbReference type="RefSeq" id="NP_990763.1">
    <property type="nucleotide sequence ID" value="NM_205432.1"/>
</dbReference>
<dbReference type="SMR" id="P34822"/>
<dbReference type="FunCoup" id="P34822">
    <property type="interactions" value="14"/>
</dbReference>
<dbReference type="STRING" id="9031.ENSGALP00000009606"/>
<dbReference type="GlyCosmos" id="P34822">
    <property type="glycosylation" value="4 sites, No reported glycans"/>
</dbReference>
<dbReference type="GlyGen" id="P34822">
    <property type="glycosylation" value="4 sites"/>
</dbReference>
<dbReference type="PaxDb" id="9031-ENSGALP00000009606"/>
<dbReference type="GeneID" id="396412"/>
<dbReference type="KEGG" id="gga:396412"/>
<dbReference type="CTD" id="2658"/>
<dbReference type="VEuPathDB" id="HostDB:geneid_396412"/>
<dbReference type="eggNOG" id="KOG3900">
    <property type="taxonomic scope" value="Eukaryota"/>
</dbReference>
<dbReference type="HOGENOM" id="CLU_020515_2_0_1"/>
<dbReference type="InParanoid" id="P34822"/>
<dbReference type="OMA" id="GTFDLRM"/>
<dbReference type="OrthoDB" id="5987191at2759"/>
<dbReference type="PhylomeDB" id="P34822"/>
<dbReference type="TreeFam" id="TF316134"/>
<dbReference type="Reactome" id="R-GGA-201451">
    <property type="pathway name" value="Signaling by BMP"/>
</dbReference>
<dbReference type="PRO" id="PR:P34822"/>
<dbReference type="Proteomes" id="UP000000539">
    <property type="component" value="Chromosome 6"/>
</dbReference>
<dbReference type="Bgee" id="ENSGALG00000005981">
    <property type="expression patterns" value="Expressed in colon and 4 other cell types or tissues"/>
</dbReference>
<dbReference type="GO" id="GO:0005615">
    <property type="term" value="C:extracellular space"/>
    <property type="evidence" value="ECO:0000318"/>
    <property type="project" value="GO_Central"/>
</dbReference>
<dbReference type="GO" id="GO:0005125">
    <property type="term" value="F:cytokine activity"/>
    <property type="evidence" value="ECO:0000318"/>
    <property type="project" value="GO_Central"/>
</dbReference>
<dbReference type="GO" id="GO:0008083">
    <property type="term" value="F:growth factor activity"/>
    <property type="evidence" value="ECO:0007669"/>
    <property type="project" value="UniProtKB-KW"/>
</dbReference>
<dbReference type="GO" id="GO:0048513">
    <property type="term" value="P:animal organ development"/>
    <property type="evidence" value="ECO:0007669"/>
    <property type="project" value="UniProtKB-ARBA"/>
</dbReference>
<dbReference type="GO" id="GO:0030509">
    <property type="term" value="P:BMP signaling pathway"/>
    <property type="evidence" value="ECO:0000318"/>
    <property type="project" value="GO_Central"/>
</dbReference>
<dbReference type="CDD" id="cd19400">
    <property type="entry name" value="TGF_beta_BMP9"/>
    <property type="match status" value="1"/>
</dbReference>
<dbReference type="FunFam" id="2.10.90.10:FF:000001">
    <property type="entry name" value="Bone morphogenetic protein 4"/>
    <property type="match status" value="1"/>
</dbReference>
<dbReference type="FunFam" id="2.60.120.970:FF:000014">
    <property type="entry name" value="growth/differentiation factor 2"/>
    <property type="match status" value="1"/>
</dbReference>
<dbReference type="Gene3D" id="2.60.120.970">
    <property type="match status" value="1"/>
</dbReference>
<dbReference type="Gene3D" id="2.10.90.10">
    <property type="entry name" value="Cystine-knot cytokines"/>
    <property type="match status" value="1"/>
</dbReference>
<dbReference type="InterPro" id="IPR029034">
    <property type="entry name" value="Cystine-knot_cytokine"/>
</dbReference>
<dbReference type="InterPro" id="IPR001839">
    <property type="entry name" value="TGF-b_C"/>
</dbReference>
<dbReference type="InterPro" id="IPR001111">
    <property type="entry name" value="TGF-b_propeptide"/>
</dbReference>
<dbReference type="InterPro" id="IPR015615">
    <property type="entry name" value="TGF-beta-rel"/>
</dbReference>
<dbReference type="InterPro" id="IPR017948">
    <property type="entry name" value="TGFb_CS"/>
</dbReference>
<dbReference type="PANTHER" id="PTHR11848:SF157">
    <property type="entry name" value="GROWTH_DIFFERENTIATION FACTOR 2"/>
    <property type="match status" value="1"/>
</dbReference>
<dbReference type="PANTHER" id="PTHR11848">
    <property type="entry name" value="TGF-BETA FAMILY"/>
    <property type="match status" value="1"/>
</dbReference>
<dbReference type="Pfam" id="PF00019">
    <property type="entry name" value="TGF_beta"/>
    <property type="match status" value="1"/>
</dbReference>
<dbReference type="Pfam" id="PF00688">
    <property type="entry name" value="TGFb_propeptide"/>
    <property type="match status" value="1"/>
</dbReference>
<dbReference type="PRINTS" id="PR00669">
    <property type="entry name" value="INHIBINA"/>
</dbReference>
<dbReference type="SMART" id="SM00204">
    <property type="entry name" value="TGFB"/>
    <property type="match status" value="1"/>
</dbReference>
<dbReference type="SUPFAM" id="SSF57501">
    <property type="entry name" value="Cystine-knot cytokines"/>
    <property type="match status" value="1"/>
</dbReference>
<dbReference type="PROSITE" id="PS00250">
    <property type="entry name" value="TGF_BETA_1"/>
    <property type="match status" value="1"/>
</dbReference>
<dbReference type="PROSITE" id="PS51362">
    <property type="entry name" value="TGF_BETA_2"/>
    <property type="match status" value="1"/>
</dbReference>
<feature type="signal peptide" evidence="2">
    <location>
        <begin position="1"/>
        <end position="20"/>
    </location>
</feature>
<feature type="propeptide" id="PRO_0000033906" evidence="4">
    <location>
        <begin position="21"/>
        <end position="318"/>
    </location>
</feature>
<feature type="chain" id="PRO_0000033907" description="Dorsalin-1">
    <location>
        <begin position="319"/>
        <end position="427"/>
    </location>
</feature>
<feature type="region of interest" description="Disordered" evidence="3">
    <location>
        <begin position="288"/>
        <end position="321"/>
    </location>
</feature>
<feature type="compositionally biased region" description="Basic residues" evidence="3">
    <location>
        <begin position="307"/>
        <end position="321"/>
    </location>
</feature>
<feature type="glycosylation site" description="N-linked (GlcNAc...) asparagine" evidence="2">
    <location>
        <position position="71"/>
    </location>
</feature>
<feature type="glycosylation site" description="N-linked (GlcNAc...) asparagine" evidence="2">
    <location>
        <position position="136"/>
    </location>
</feature>
<feature type="glycosylation site" description="N-linked (GlcNAc...) asparagine" evidence="2">
    <location>
        <position position="265"/>
    </location>
</feature>
<feature type="glycosylation site" description="N-linked (GlcNAc...) asparagine" evidence="2">
    <location>
        <position position="292"/>
    </location>
</feature>
<feature type="disulfide bond" evidence="1">
    <location>
        <begin position="325"/>
        <end position="391"/>
    </location>
</feature>
<feature type="disulfide bond" evidence="1">
    <location>
        <begin position="354"/>
        <end position="424"/>
    </location>
</feature>
<feature type="disulfide bond" evidence="1">
    <location>
        <begin position="358"/>
        <end position="426"/>
    </location>
</feature>
<feature type="disulfide bond" description="Interchain" evidence="1">
    <location>
        <position position="390"/>
    </location>
</feature>
<keyword id="KW-0165">Cleavage on pair of basic residues</keyword>
<keyword id="KW-0202">Cytokine</keyword>
<keyword id="KW-0903">Direct protein sequencing</keyword>
<keyword id="KW-1015">Disulfide bond</keyword>
<keyword id="KW-0325">Glycoprotein</keyword>
<keyword id="KW-0339">Growth factor</keyword>
<keyword id="KW-1185">Reference proteome</keyword>
<keyword id="KW-0964">Secreted</keyword>
<keyword id="KW-0732">Signal</keyword>
<sequence>MHYFGVLAALSVFNIIACLTRGKPLENWKKLPVMEESDAFFHDPGEVEHDTHFDFKSFLENMKTDLLRSLNLSRVPSQVKTKEEPPQFMIDLYNRYTADKSSIPASNIVRSFSTEDVVSLISPEEHSFQKHILLFNISIPRYEEVTRAELRIFISCHKEVGSPSRLEGNMVIYDVLDGDHWENKESTKSLLVSHSIQDCGWEMFEVSSAVKRWVKADKMKTKNKLEVVIESKDLSGFPCGKLDITVTHDTKNLPLLIVFSNDRSNGTKETKVELREMIVHEQESVLNKLGKNDSSSEEEQREEKAIARPRQHSSRSKRSIGANHCRRTSLHVNFKEIGWDSWIIAPKDYEAFECKGGCFFPLTDNVTPTKHAIVQTLVHLQNPKKASKACCVPTKLDAISILYKDDAGVPTLIYNYEGMKVAECGCR</sequence>
<organism>
    <name type="scientific">Gallus gallus</name>
    <name type="common">Chicken</name>
    <dbReference type="NCBI Taxonomy" id="9031"/>
    <lineage>
        <taxon>Eukaryota</taxon>
        <taxon>Metazoa</taxon>
        <taxon>Chordata</taxon>
        <taxon>Craniata</taxon>
        <taxon>Vertebrata</taxon>
        <taxon>Euteleostomi</taxon>
        <taxon>Archelosauria</taxon>
        <taxon>Archosauria</taxon>
        <taxon>Dinosauria</taxon>
        <taxon>Saurischia</taxon>
        <taxon>Theropoda</taxon>
        <taxon>Coelurosauria</taxon>
        <taxon>Aves</taxon>
        <taxon>Neognathae</taxon>
        <taxon>Galloanserae</taxon>
        <taxon>Galliformes</taxon>
        <taxon>Phasianidae</taxon>
        <taxon>Phasianinae</taxon>
        <taxon>Gallus</taxon>
    </lineage>
</organism>
<comment type="function">
    <text>Appears to regulate cell differentiation within the neural tube. May regulate the differentiation of cell types along the dorsoventral axis of the neural tube, acting in conjunction with distinct ventralizing signals from the notochord and floor plate. Controls the cell differentiation in the neural tube in several ways: (1) promotes the differentiation of cell types that derive from the dorsal neural tube. (2) ensures that the dorsal neural tube is refractory to ventralizing species from the notochord. (3) can diffuse and influence the fate of cells in more ventral regions of the neural tube.</text>
</comment>
<comment type="subunit">
    <text>Homodimer; disulfide-linked.</text>
</comment>
<comment type="subcellular location">
    <subcellularLocation>
        <location>Secreted</location>
    </subcellularLocation>
</comment>
<comment type="tissue specificity">
    <text>Expressed selectively in the dorsal neural tube. Lower levels seen in kidney and myotomal cells.</text>
</comment>
<comment type="developmental stage">
    <text>Is not expressed in neural cells at stages before neural tube closure. Is expressed at high levels in the dorsal third of the neural tube, beginning at the time of neural tube closure, but not by ventral neural cells or by nonneural cells. Dorsal restriction persists in the spinal cord at stages after the onset of neuronal differentiation. At later stages of spinal development, is restricted to the dorsomedial region of the spinal cord, including but not confined to the roof plate.</text>
</comment>
<comment type="similarity">
    <text evidence="5">Belongs to the TGF-beta family.</text>
</comment>
<reference key="1">
    <citation type="journal article" date="1993" name="Cell">
        <title>Control of cell pattern in the neural tube: regulation of cell differentiation by dorsalin-1, a novel TGF beta family member.</title>
        <authorList>
            <person name="Basler K."/>
            <person name="Edlund T."/>
            <person name="Jessell T.M."/>
            <person name="Yamada T."/>
        </authorList>
    </citation>
    <scope>NUCLEOTIDE SEQUENCE [MRNA]</scope>
    <scope>PROTEIN SEQUENCE OF 319-322</scope>
    <source>
        <tissue>Spinal cord</tissue>
    </source>
</reference>
<evidence type="ECO:0000250" key="1"/>
<evidence type="ECO:0000255" key="2"/>
<evidence type="ECO:0000256" key="3">
    <source>
        <dbReference type="SAM" id="MobiDB-lite"/>
    </source>
</evidence>
<evidence type="ECO:0000269" key="4">
    <source>
    </source>
</evidence>
<evidence type="ECO:0000305" key="5"/>
<proteinExistence type="evidence at protein level"/>
<name>DSL1_CHICK</name>
<protein>
    <recommendedName>
        <fullName>Dorsalin-1</fullName>
        <shortName>DSL-1</shortName>
    </recommendedName>
</protein>
<gene>
    <name type="primary">DSL1</name>
</gene>
<accession>P34822</accession>